<gene>
    <name evidence="1" type="primary">glgC</name>
    <name type="ordered locus">SAV_7254</name>
</gene>
<name>GLGC_STRAW</name>
<evidence type="ECO:0000255" key="1">
    <source>
        <dbReference type="HAMAP-Rule" id="MF_00624"/>
    </source>
</evidence>
<accession>Q826D9</accession>
<organism>
    <name type="scientific">Streptomyces avermitilis (strain ATCC 31267 / DSM 46492 / JCM 5070 / NBRC 14893 / NCIMB 12804 / NRRL 8165 / MA-4680)</name>
    <dbReference type="NCBI Taxonomy" id="227882"/>
    <lineage>
        <taxon>Bacteria</taxon>
        <taxon>Bacillati</taxon>
        <taxon>Actinomycetota</taxon>
        <taxon>Actinomycetes</taxon>
        <taxon>Kitasatosporales</taxon>
        <taxon>Streptomycetaceae</taxon>
        <taxon>Streptomyces</taxon>
    </lineage>
</organism>
<protein>
    <recommendedName>
        <fullName evidence="1">Glucose-1-phosphate adenylyltransferase</fullName>
        <ecNumber evidence="1">2.7.7.27</ecNumber>
    </recommendedName>
    <alternativeName>
        <fullName evidence="1">ADP-glucose pyrophosphorylase</fullName>
        <shortName evidence="1">ADPGlc PPase</shortName>
    </alternativeName>
    <alternativeName>
        <fullName evidence="1">ADP-glucose synthase</fullName>
    </alternativeName>
</protein>
<dbReference type="EC" id="2.7.7.27" evidence="1"/>
<dbReference type="EMBL" id="BA000030">
    <property type="protein sequence ID" value="BAC74965.1"/>
    <property type="molecule type" value="Genomic_DNA"/>
</dbReference>
<dbReference type="RefSeq" id="WP_010988649.1">
    <property type="nucleotide sequence ID" value="NZ_JZJK01000085.1"/>
</dbReference>
<dbReference type="SMR" id="Q826D9"/>
<dbReference type="GeneID" id="41544326"/>
<dbReference type="KEGG" id="sma:SAVERM_7254"/>
<dbReference type="eggNOG" id="COG0448">
    <property type="taxonomic scope" value="Bacteria"/>
</dbReference>
<dbReference type="HOGENOM" id="CLU_029499_14_1_11"/>
<dbReference type="OrthoDB" id="9801810at2"/>
<dbReference type="UniPathway" id="UPA00164"/>
<dbReference type="Proteomes" id="UP000000428">
    <property type="component" value="Chromosome"/>
</dbReference>
<dbReference type="GO" id="GO:0005524">
    <property type="term" value="F:ATP binding"/>
    <property type="evidence" value="ECO:0007669"/>
    <property type="project" value="UniProtKB-KW"/>
</dbReference>
<dbReference type="GO" id="GO:0008878">
    <property type="term" value="F:glucose-1-phosphate adenylyltransferase activity"/>
    <property type="evidence" value="ECO:0007669"/>
    <property type="project" value="UniProtKB-UniRule"/>
</dbReference>
<dbReference type="GO" id="GO:0005978">
    <property type="term" value="P:glycogen biosynthetic process"/>
    <property type="evidence" value="ECO:0007669"/>
    <property type="project" value="UniProtKB-UniRule"/>
</dbReference>
<dbReference type="CDD" id="cd02508">
    <property type="entry name" value="ADP_Glucose_PP"/>
    <property type="match status" value="1"/>
</dbReference>
<dbReference type="CDD" id="cd04651">
    <property type="entry name" value="LbH_G1P_AT_C"/>
    <property type="match status" value="1"/>
</dbReference>
<dbReference type="Gene3D" id="2.160.10.10">
    <property type="entry name" value="Hexapeptide repeat proteins"/>
    <property type="match status" value="1"/>
</dbReference>
<dbReference type="Gene3D" id="3.90.550.10">
    <property type="entry name" value="Spore Coat Polysaccharide Biosynthesis Protein SpsA, Chain A"/>
    <property type="match status" value="1"/>
</dbReference>
<dbReference type="HAMAP" id="MF_00624">
    <property type="entry name" value="GlgC"/>
    <property type="match status" value="1"/>
</dbReference>
<dbReference type="InterPro" id="IPR011831">
    <property type="entry name" value="ADP-Glc_PPase"/>
</dbReference>
<dbReference type="InterPro" id="IPR005836">
    <property type="entry name" value="ADP_Glu_pyroP_CS"/>
</dbReference>
<dbReference type="InterPro" id="IPR023049">
    <property type="entry name" value="GlgC_bac"/>
</dbReference>
<dbReference type="InterPro" id="IPR056818">
    <property type="entry name" value="GlmU/GlgC-like_hexapep"/>
</dbReference>
<dbReference type="InterPro" id="IPR005835">
    <property type="entry name" value="NTP_transferase_dom"/>
</dbReference>
<dbReference type="InterPro" id="IPR029044">
    <property type="entry name" value="Nucleotide-diphossugar_trans"/>
</dbReference>
<dbReference type="InterPro" id="IPR011004">
    <property type="entry name" value="Trimer_LpxA-like_sf"/>
</dbReference>
<dbReference type="NCBIfam" id="TIGR02091">
    <property type="entry name" value="glgC"/>
    <property type="match status" value="1"/>
</dbReference>
<dbReference type="NCBIfam" id="NF002023">
    <property type="entry name" value="PRK00844.1"/>
    <property type="match status" value="1"/>
</dbReference>
<dbReference type="PANTHER" id="PTHR43523:SF2">
    <property type="entry name" value="GLUCOSE-1-PHOSPHATE ADENYLYLTRANSFERASE"/>
    <property type="match status" value="1"/>
</dbReference>
<dbReference type="PANTHER" id="PTHR43523">
    <property type="entry name" value="GLUCOSE-1-PHOSPHATE ADENYLYLTRANSFERASE-RELATED"/>
    <property type="match status" value="1"/>
</dbReference>
<dbReference type="Pfam" id="PF24894">
    <property type="entry name" value="Hexapep_GlmU"/>
    <property type="match status" value="1"/>
</dbReference>
<dbReference type="Pfam" id="PF00483">
    <property type="entry name" value="NTP_transferase"/>
    <property type="match status" value="1"/>
</dbReference>
<dbReference type="SUPFAM" id="SSF53448">
    <property type="entry name" value="Nucleotide-diphospho-sugar transferases"/>
    <property type="match status" value="1"/>
</dbReference>
<dbReference type="SUPFAM" id="SSF51161">
    <property type="entry name" value="Trimeric LpxA-like enzymes"/>
    <property type="match status" value="1"/>
</dbReference>
<dbReference type="PROSITE" id="PS00808">
    <property type="entry name" value="ADP_GLC_PYROPHOSPH_1"/>
    <property type="match status" value="1"/>
</dbReference>
<dbReference type="PROSITE" id="PS00809">
    <property type="entry name" value="ADP_GLC_PYROPHOSPH_2"/>
    <property type="match status" value="1"/>
</dbReference>
<dbReference type="PROSITE" id="PS00810">
    <property type="entry name" value="ADP_GLC_PYROPHOSPH_3"/>
    <property type="match status" value="1"/>
</dbReference>
<reference key="1">
    <citation type="journal article" date="2001" name="Proc. Natl. Acad. Sci. U.S.A.">
        <title>Genome sequence of an industrial microorganism Streptomyces avermitilis: deducing the ability of producing secondary metabolites.</title>
        <authorList>
            <person name="Omura S."/>
            <person name="Ikeda H."/>
            <person name="Ishikawa J."/>
            <person name="Hanamoto A."/>
            <person name="Takahashi C."/>
            <person name="Shinose M."/>
            <person name="Takahashi Y."/>
            <person name="Horikawa H."/>
            <person name="Nakazawa H."/>
            <person name="Osonoe T."/>
            <person name="Kikuchi H."/>
            <person name="Shiba T."/>
            <person name="Sakaki Y."/>
            <person name="Hattori M."/>
        </authorList>
    </citation>
    <scope>NUCLEOTIDE SEQUENCE [LARGE SCALE GENOMIC DNA]</scope>
    <source>
        <strain>ATCC 31267 / DSM 46492 / JCM 5070 / NBRC 14893 / NCIMB 12804 / NRRL 8165 / MA-4680</strain>
    </source>
</reference>
<reference key="2">
    <citation type="journal article" date="2003" name="Nat. Biotechnol.">
        <title>Complete genome sequence and comparative analysis of the industrial microorganism Streptomyces avermitilis.</title>
        <authorList>
            <person name="Ikeda H."/>
            <person name="Ishikawa J."/>
            <person name="Hanamoto A."/>
            <person name="Shinose M."/>
            <person name="Kikuchi H."/>
            <person name="Shiba T."/>
            <person name="Sakaki Y."/>
            <person name="Hattori M."/>
            <person name="Omura S."/>
        </authorList>
    </citation>
    <scope>NUCLEOTIDE SEQUENCE [LARGE SCALE GENOMIC DNA]</scope>
    <source>
        <strain>ATCC 31267 / DSM 46492 / JCM 5070 / NBRC 14893 / NCIMB 12804 / NRRL 8165 / MA-4680</strain>
    </source>
</reference>
<proteinExistence type="inferred from homology"/>
<keyword id="KW-0067">ATP-binding</keyword>
<keyword id="KW-0119">Carbohydrate metabolism</keyword>
<keyword id="KW-0320">Glycogen biosynthesis</keyword>
<keyword id="KW-0321">Glycogen metabolism</keyword>
<keyword id="KW-0547">Nucleotide-binding</keyword>
<keyword id="KW-0548">Nucleotidyltransferase</keyword>
<keyword id="KW-1185">Reference proteome</keyword>
<keyword id="KW-0808">Transferase</keyword>
<feature type="chain" id="PRO_0000195332" description="Glucose-1-phosphate adenylyltransferase">
    <location>
        <begin position="1"/>
        <end position="406"/>
    </location>
</feature>
<feature type="binding site" evidence="1">
    <location>
        <position position="100"/>
    </location>
    <ligand>
        <name>alpha-D-glucose 1-phosphate</name>
        <dbReference type="ChEBI" id="CHEBI:58601"/>
    </ligand>
</feature>
<feature type="binding site" evidence="1">
    <location>
        <position position="165"/>
    </location>
    <ligand>
        <name>alpha-D-glucose 1-phosphate</name>
        <dbReference type="ChEBI" id="CHEBI:58601"/>
    </ligand>
</feature>
<feature type="binding site" evidence="1">
    <location>
        <begin position="181"/>
        <end position="182"/>
    </location>
    <ligand>
        <name>alpha-D-glucose 1-phosphate</name>
        <dbReference type="ChEBI" id="CHEBI:58601"/>
    </ligand>
</feature>
<feature type="binding site" evidence="1">
    <location>
        <position position="199"/>
    </location>
    <ligand>
        <name>alpha-D-glucose 1-phosphate</name>
        <dbReference type="ChEBI" id="CHEBI:58601"/>
    </ligand>
</feature>
<sequence length="406" mass="43477">MRRGGPSVLGIVLAGGEGKRLMPLTADRAKPAVTFGGTYRLVDFVLSNLVNADILRICVLTQYKSHSLDRHITTTWRMSSLLGNYITPVPAQQRLGPRWYLGSADAILQSLNLVYDERPEYIAVFGADHVYRMDPRQMLGEHIESGAGVTVAGIRVPRAESSSFGVIAPGSDGQTVENFLEKPADPPGLPGDPECVFASMGNYVFTTKVLIEALQRDAEDGDSVHDMGGSILPALTDRGEARLYDFSANHVPGETTRDQGYWRDVGTLDAYYDAHMDLIAERPAFNLFNRSWPIYTHSGQLSPARFNAGGIASESIISAGCLIRGQVTRSVLSPGVVVDPGAVVQGSVLHDNVHVGRGAVVRGAVLDKNVEVPPGATIGVNPGRDADLYTVSKGGVIGLGKGQRVS</sequence>
<comment type="function">
    <text evidence="1">Involved in the biosynthesis of ADP-glucose, a building block required for the elongation reactions to produce glycogen. Catalyzes the reaction between ATP and alpha-D-glucose 1-phosphate (G1P) to produce pyrophosphate and ADP-Glc.</text>
</comment>
<comment type="catalytic activity">
    <reaction evidence="1">
        <text>alpha-D-glucose 1-phosphate + ATP + H(+) = ADP-alpha-D-glucose + diphosphate</text>
        <dbReference type="Rhea" id="RHEA:12120"/>
        <dbReference type="ChEBI" id="CHEBI:15378"/>
        <dbReference type="ChEBI" id="CHEBI:30616"/>
        <dbReference type="ChEBI" id="CHEBI:33019"/>
        <dbReference type="ChEBI" id="CHEBI:57498"/>
        <dbReference type="ChEBI" id="CHEBI:58601"/>
        <dbReference type="EC" id="2.7.7.27"/>
    </reaction>
</comment>
<comment type="pathway">
    <text evidence="1">Glycan biosynthesis; glycogen biosynthesis.</text>
</comment>
<comment type="subunit">
    <text evidence="1">Homotetramer.</text>
</comment>
<comment type="similarity">
    <text evidence="1">Belongs to the bacterial/plant glucose-1-phosphate adenylyltransferase family.</text>
</comment>